<sequence length="235" mass="24292">MAQADPADRDRLIVALDVPSVDAAKAMIDKLGDSVGFYKIGYQLAYAGGLALVPQLVDAGKKVFVDLKLHDIGNTVARGVESLTALGATFLTVHAYPQTMRAAVEARGTSGMKILAVTVLTSYDDADLTDAGYALGVRDLVEARARQALAIGVDGLVCSPEEAAHLRGIIGPRMALVTPGIRPAGSAAGDQKRIMTPARAIAAGASHLVVGRPVMEAADPKQAAEAIVAEIAQAK</sequence>
<protein>
    <recommendedName>
        <fullName evidence="1">Orotidine 5'-phosphate decarboxylase</fullName>
        <ecNumber evidence="1">4.1.1.23</ecNumber>
    </recommendedName>
    <alternativeName>
        <fullName evidence="1">OMP decarboxylase</fullName>
        <shortName evidence="1">OMPDCase</shortName>
        <shortName evidence="1">OMPdecase</shortName>
    </alternativeName>
</protein>
<evidence type="ECO:0000255" key="1">
    <source>
        <dbReference type="HAMAP-Rule" id="MF_01200"/>
    </source>
</evidence>
<organism>
    <name type="scientific">Rhodopseudomonas palustris (strain HaA2)</name>
    <dbReference type="NCBI Taxonomy" id="316058"/>
    <lineage>
        <taxon>Bacteria</taxon>
        <taxon>Pseudomonadati</taxon>
        <taxon>Pseudomonadota</taxon>
        <taxon>Alphaproteobacteria</taxon>
        <taxon>Hyphomicrobiales</taxon>
        <taxon>Nitrobacteraceae</taxon>
        <taxon>Rhodopseudomonas</taxon>
    </lineage>
</organism>
<keyword id="KW-0210">Decarboxylase</keyword>
<keyword id="KW-0456">Lyase</keyword>
<keyword id="KW-0665">Pyrimidine biosynthesis</keyword>
<keyword id="KW-1185">Reference proteome</keyword>
<comment type="function">
    <text evidence="1">Catalyzes the decarboxylation of orotidine 5'-monophosphate (OMP) to uridine 5'-monophosphate (UMP).</text>
</comment>
<comment type="catalytic activity">
    <reaction evidence="1">
        <text>orotidine 5'-phosphate + H(+) = UMP + CO2</text>
        <dbReference type="Rhea" id="RHEA:11596"/>
        <dbReference type="ChEBI" id="CHEBI:15378"/>
        <dbReference type="ChEBI" id="CHEBI:16526"/>
        <dbReference type="ChEBI" id="CHEBI:57538"/>
        <dbReference type="ChEBI" id="CHEBI:57865"/>
        <dbReference type="EC" id="4.1.1.23"/>
    </reaction>
</comment>
<comment type="pathway">
    <text evidence="1">Pyrimidine metabolism; UMP biosynthesis via de novo pathway; UMP from orotate: step 2/2.</text>
</comment>
<comment type="subunit">
    <text evidence="1">Homodimer.</text>
</comment>
<comment type="similarity">
    <text evidence="1">Belongs to the OMP decarboxylase family. Type 1 subfamily.</text>
</comment>
<feature type="chain" id="PRO_0000241900" description="Orotidine 5'-phosphate decarboxylase">
    <location>
        <begin position="1"/>
        <end position="235"/>
    </location>
</feature>
<feature type="active site" description="Proton donor" evidence="1">
    <location>
        <position position="68"/>
    </location>
</feature>
<feature type="binding site" evidence="1">
    <location>
        <position position="17"/>
    </location>
    <ligand>
        <name>substrate</name>
    </ligand>
</feature>
<feature type="binding site" evidence="1">
    <location>
        <position position="39"/>
    </location>
    <ligand>
        <name>substrate</name>
    </ligand>
</feature>
<feature type="binding site" evidence="1">
    <location>
        <begin position="66"/>
        <end position="75"/>
    </location>
    <ligand>
        <name>substrate</name>
    </ligand>
</feature>
<feature type="binding site" evidence="1">
    <location>
        <position position="121"/>
    </location>
    <ligand>
        <name>substrate</name>
    </ligand>
</feature>
<feature type="binding site" evidence="1">
    <location>
        <position position="182"/>
    </location>
    <ligand>
        <name>substrate</name>
    </ligand>
</feature>
<feature type="binding site" evidence="1">
    <location>
        <position position="191"/>
    </location>
    <ligand>
        <name>substrate</name>
    </ligand>
</feature>
<feature type="binding site" evidence="1">
    <location>
        <position position="211"/>
    </location>
    <ligand>
        <name>substrate</name>
    </ligand>
</feature>
<feature type="binding site" evidence="1">
    <location>
        <position position="212"/>
    </location>
    <ligand>
        <name>substrate</name>
    </ligand>
</feature>
<gene>
    <name evidence="1" type="primary">pyrF</name>
    <name type="ordered locus">RPB_0433</name>
</gene>
<proteinExistence type="inferred from homology"/>
<reference key="1">
    <citation type="submission" date="2006-01" db="EMBL/GenBank/DDBJ databases">
        <title>Complete sequence of Rhodopseudomonas palustris HaA2.</title>
        <authorList>
            <consortium name="US DOE Joint Genome Institute"/>
            <person name="Copeland A."/>
            <person name="Lucas S."/>
            <person name="Lapidus A."/>
            <person name="Barry K."/>
            <person name="Detter J.C."/>
            <person name="Glavina T."/>
            <person name="Hammon N."/>
            <person name="Israni S."/>
            <person name="Pitluck S."/>
            <person name="Chain P."/>
            <person name="Malfatti S."/>
            <person name="Shin M."/>
            <person name="Vergez L."/>
            <person name="Schmutz J."/>
            <person name="Larimer F."/>
            <person name="Land M."/>
            <person name="Hauser L."/>
            <person name="Pelletier D.A."/>
            <person name="Kyrpides N."/>
            <person name="Anderson I."/>
            <person name="Oda Y."/>
            <person name="Harwood C.S."/>
            <person name="Richardson P."/>
        </authorList>
    </citation>
    <scope>NUCLEOTIDE SEQUENCE [LARGE SCALE GENOMIC DNA]</scope>
    <source>
        <strain>HaA2</strain>
    </source>
</reference>
<dbReference type="EC" id="4.1.1.23" evidence="1"/>
<dbReference type="EMBL" id="CP000250">
    <property type="protein sequence ID" value="ABD05144.1"/>
    <property type="molecule type" value="Genomic_DNA"/>
</dbReference>
<dbReference type="RefSeq" id="WP_011439334.1">
    <property type="nucleotide sequence ID" value="NC_007778.1"/>
</dbReference>
<dbReference type="SMR" id="Q2J316"/>
<dbReference type="STRING" id="316058.RPB_0433"/>
<dbReference type="KEGG" id="rpb:RPB_0433"/>
<dbReference type="eggNOG" id="COG0284">
    <property type="taxonomic scope" value="Bacteria"/>
</dbReference>
<dbReference type="HOGENOM" id="CLU_067069_1_0_5"/>
<dbReference type="OrthoDB" id="9806203at2"/>
<dbReference type="UniPathway" id="UPA00070">
    <property type="reaction ID" value="UER00120"/>
</dbReference>
<dbReference type="Proteomes" id="UP000008809">
    <property type="component" value="Chromosome"/>
</dbReference>
<dbReference type="GO" id="GO:0005829">
    <property type="term" value="C:cytosol"/>
    <property type="evidence" value="ECO:0007669"/>
    <property type="project" value="TreeGrafter"/>
</dbReference>
<dbReference type="GO" id="GO:0004590">
    <property type="term" value="F:orotidine-5'-phosphate decarboxylase activity"/>
    <property type="evidence" value="ECO:0007669"/>
    <property type="project" value="UniProtKB-UniRule"/>
</dbReference>
<dbReference type="GO" id="GO:0006207">
    <property type="term" value="P:'de novo' pyrimidine nucleobase biosynthetic process"/>
    <property type="evidence" value="ECO:0007669"/>
    <property type="project" value="InterPro"/>
</dbReference>
<dbReference type="GO" id="GO:0044205">
    <property type="term" value="P:'de novo' UMP biosynthetic process"/>
    <property type="evidence" value="ECO:0007669"/>
    <property type="project" value="UniProtKB-UniRule"/>
</dbReference>
<dbReference type="CDD" id="cd04725">
    <property type="entry name" value="OMP_decarboxylase_like"/>
    <property type="match status" value="1"/>
</dbReference>
<dbReference type="Gene3D" id="3.20.20.70">
    <property type="entry name" value="Aldolase class I"/>
    <property type="match status" value="1"/>
</dbReference>
<dbReference type="HAMAP" id="MF_01200_B">
    <property type="entry name" value="OMPdecase_type1_B"/>
    <property type="match status" value="1"/>
</dbReference>
<dbReference type="InterPro" id="IPR013785">
    <property type="entry name" value="Aldolase_TIM"/>
</dbReference>
<dbReference type="InterPro" id="IPR014732">
    <property type="entry name" value="OMPdecase"/>
</dbReference>
<dbReference type="InterPro" id="IPR018089">
    <property type="entry name" value="OMPdecase_AS"/>
</dbReference>
<dbReference type="InterPro" id="IPR047596">
    <property type="entry name" value="OMPdecase_bac"/>
</dbReference>
<dbReference type="InterPro" id="IPR001754">
    <property type="entry name" value="OMPdeCOase_dom"/>
</dbReference>
<dbReference type="InterPro" id="IPR011060">
    <property type="entry name" value="RibuloseP-bd_barrel"/>
</dbReference>
<dbReference type="NCBIfam" id="NF001273">
    <property type="entry name" value="PRK00230.1"/>
    <property type="match status" value="1"/>
</dbReference>
<dbReference type="NCBIfam" id="TIGR01740">
    <property type="entry name" value="pyrF"/>
    <property type="match status" value="1"/>
</dbReference>
<dbReference type="PANTHER" id="PTHR32119">
    <property type="entry name" value="OROTIDINE 5'-PHOSPHATE DECARBOXYLASE"/>
    <property type="match status" value="1"/>
</dbReference>
<dbReference type="PANTHER" id="PTHR32119:SF2">
    <property type="entry name" value="OROTIDINE 5'-PHOSPHATE DECARBOXYLASE"/>
    <property type="match status" value="1"/>
</dbReference>
<dbReference type="Pfam" id="PF00215">
    <property type="entry name" value="OMPdecase"/>
    <property type="match status" value="1"/>
</dbReference>
<dbReference type="SMART" id="SM00934">
    <property type="entry name" value="OMPdecase"/>
    <property type="match status" value="1"/>
</dbReference>
<dbReference type="SUPFAM" id="SSF51366">
    <property type="entry name" value="Ribulose-phoshate binding barrel"/>
    <property type="match status" value="1"/>
</dbReference>
<dbReference type="PROSITE" id="PS00156">
    <property type="entry name" value="OMPDECASE"/>
    <property type="match status" value="1"/>
</dbReference>
<accession>Q2J316</accession>
<name>PYRF_RHOP2</name>